<reference key="1">
    <citation type="submission" date="2006-11" db="EMBL/GenBank/DDBJ databases">
        <title>Sequence of Campylobacter fetus subsp. fetus 82-40.</title>
        <authorList>
            <person name="Fouts D.E."/>
            <person name="Nelson K.E."/>
        </authorList>
    </citation>
    <scope>NUCLEOTIDE SEQUENCE [LARGE SCALE GENOMIC DNA]</scope>
    <source>
        <strain>82-40</strain>
    </source>
</reference>
<accession>A0RNK3</accession>
<keyword id="KW-0030">Aminoacyl-tRNA synthetase</keyword>
<keyword id="KW-0067">ATP-binding</keyword>
<keyword id="KW-0963">Cytoplasm</keyword>
<keyword id="KW-0436">Ligase</keyword>
<keyword id="KW-0479">Metal-binding</keyword>
<keyword id="KW-0547">Nucleotide-binding</keyword>
<keyword id="KW-0648">Protein biosynthesis</keyword>
<keyword id="KW-0862">Zinc</keyword>
<comment type="function">
    <text evidence="1">Catalyzes the attachment of isoleucine to tRNA(Ile). As IleRS can inadvertently accommodate and process structurally similar amino acids such as valine, to avoid such errors it has two additional distinct tRNA(Ile)-dependent editing activities. One activity is designated as 'pretransfer' editing and involves the hydrolysis of activated Val-AMP. The other activity is designated 'posttransfer' editing and involves deacylation of mischarged Val-tRNA(Ile).</text>
</comment>
<comment type="catalytic activity">
    <reaction evidence="1">
        <text>tRNA(Ile) + L-isoleucine + ATP = L-isoleucyl-tRNA(Ile) + AMP + diphosphate</text>
        <dbReference type="Rhea" id="RHEA:11060"/>
        <dbReference type="Rhea" id="RHEA-COMP:9666"/>
        <dbReference type="Rhea" id="RHEA-COMP:9695"/>
        <dbReference type="ChEBI" id="CHEBI:30616"/>
        <dbReference type="ChEBI" id="CHEBI:33019"/>
        <dbReference type="ChEBI" id="CHEBI:58045"/>
        <dbReference type="ChEBI" id="CHEBI:78442"/>
        <dbReference type="ChEBI" id="CHEBI:78528"/>
        <dbReference type="ChEBI" id="CHEBI:456215"/>
        <dbReference type="EC" id="6.1.1.5"/>
    </reaction>
</comment>
<comment type="cofactor">
    <cofactor evidence="1">
        <name>Zn(2+)</name>
        <dbReference type="ChEBI" id="CHEBI:29105"/>
    </cofactor>
    <text evidence="1">Binds 1 zinc ion per subunit.</text>
</comment>
<comment type="subunit">
    <text evidence="1">Monomer.</text>
</comment>
<comment type="subcellular location">
    <subcellularLocation>
        <location evidence="1">Cytoplasm</location>
    </subcellularLocation>
</comment>
<comment type="domain">
    <text evidence="1">IleRS has two distinct active sites: one for aminoacylation and one for editing. The misactivated valine is translocated from the active site to the editing site, which sterically excludes the correctly activated isoleucine. The single editing site contains two valyl binding pockets, one specific for each substrate (Val-AMP or Val-tRNA(Ile)).</text>
</comment>
<comment type="similarity">
    <text evidence="1">Belongs to the class-I aminoacyl-tRNA synthetase family. IleS type 1 subfamily.</text>
</comment>
<gene>
    <name evidence="1" type="primary">ileS</name>
    <name type="ordered locus">CFF8240_0610</name>
</gene>
<feature type="chain" id="PRO_1000022054" description="Isoleucine--tRNA ligase">
    <location>
        <begin position="1"/>
        <end position="916"/>
    </location>
</feature>
<feature type="short sequence motif" description="'HIGH' region">
    <location>
        <begin position="58"/>
        <end position="68"/>
    </location>
</feature>
<feature type="short sequence motif" description="'KMSKS' region">
    <location>
        <begin position="609"/>
        <end position="613"/>
    </location>
</feature>
<feature type="binding site" evidence="1">
    <location>
        <position position="568"/>
    </location>
    <ligand>
        <name>L-isoleucyl-5'-AMP</name>
        <dbReference type="ChEBI" id="CHEBI:178002"/>
    </ligand>
</feature>
<feature type="binding site" evidence="1">
    <location>
        <position position="612"/>
    </location>
    <ligand>
        <name>ATP</name>
        <dbReference type="ChEBI" id="CHEBI:30616"/>
    </ligand>
</feature>
<feature type="binding site" evidence="1">
    <location>
        <position position="891"/>
    </location>
    <ligand>
        <name>Zn(2+)</name>
        <dbReference type="ChEBI" id="CHEBI:29105"/>
    </ligand>
</feature>
<feature type="binding site" evidence="1">
    <location>
        <position position="894"/>
    </location>
    <ligand>
        <name>Zn(2+)</name>
        <dbReference type="ChEBI" id="CHEBI:29105"/>
    </ligand>
</feature>
<feature type="binding site" evidence="1">
    <location>
        <position position="906"/>
    </location>
    <ligand>
        <name>Zn(2+)</name>
        <dbReference type="ChEBI" id="CHEBI:29105"/>
    </ligand>
</feature>
<feature type="binding site" evidence="1">
    <location>
        <position position="909"/>
    </location>
    <ligand>
        <name>Zn(2+)</name>
        <dbReference type="ChEBI" id="CHEBI:29105"/>
    </ligand>
</feature>
<name>SYI_CAMFF</name>
<organism>
    <name type="scientific">Campylobacter fetus subsp. fetus (strain 82-40)</name>
    <dbReference type="NCBI Taxonomy" id="360106"/>
    <lineage>
        <taxon>Bacteria</taxon>
        <taxon>Pseudomonadati</taxon>
        <taxon>Campylobacterota</taxon>
        <taxon>Epsilonproteobacteria</taxon>
        <taxon>Campylobacterales</taxon>
        <taxon>Campylobacteraceae</taxon>
        <taxon>Campylobacter</taxon>
    </lineage>
</organism>
<proteinExistence type="inferred from homology"/>
<evidence type="ECO:0000255" key="1">
    <source>
        <dbReference type="HAMAP-Rule" id="MF_02002"/>
    </source>
</evidence>
<sequence length="916" mass="104180">MDYKDTLLLPTTDFAMRGNLPECEPARYAKWDEQKVYEKMKAKREKSAISFNIHDGPPYANGHLHIGHALNKILKDIILKTHYFFGQGIRYTPGWDCHGLPIEQQVEVKLGDKKKSMSKSDIRQECRNWAKEFITVQKDEFKSLGVIGDWNDPYLTMKFKFEANIYRTLCEVAKKGLLVERSKPVFWSWAARSALAEAEVEYEDKEDYSLYVAFCLSDAACKKLGVSDAKAVIWTTTPWTLVANQAISLNPNEKYALTSEGYIIALPLKETLINQGIINGKILKEFASSELEGLSAINPLNGRDSRFILGEHVLMDGGTGLVHTAPGHGEDDYFASLKYGIEVIMPVDEAGLYDETLRVKKLLPEHLLNEFIGLHIFKANEKLIELLGDAAVKVSKFVHSYPFCWRTHKPVIYRATKQWFIAMDEPKLSGKTLRQTALEALKSVKFYPEVGVKRISSMIENRPDWCISRQRDWGVPIAFFRDSATKEPIFDSRVLEHVAKVFDEKGSDAWWNLEISELLPKGTNLDPSKLEKVTDILDVWFDSGSTWNAVLNSGDYDAGGYQADMYLEGSDQHRGWFQSSLLLSCAINQKAPYKSVLTHGFTVDGNGNKMSKSKGNVIAPSDVAKRYGVEILRLWVGLSDYSSDLKISDDILKQVAEQYRKIRNTIRFLLANINDLDDISSHFGTLDKWILARATKSFKEVSECFKNYEYSKGFNILLNFLSTDLSGIYLDICKDRLYCDEKDGLRRRSSQSAMAIIAKSLLSLIAPTLTYTVDEAIEFAPDIIKNGAKDAFDLVYEPLVFEFKIDDELLTSSREKFNEIIDVLKKDKIIKSTLEVILETSSNEILANDLDEIIDWYMVSFVRNIESDEFLAEFAVGNDKFKIVKADRYKCPRCWKYAAKIDNDLCPRCAKVLKRV</sequence>
<protein>
    <recommendedName>
        <fullName evidence="1">Isoleucine--tRNA ligase</fullName>
        <ecNumber evidence="1">6.1.1.5</ecNumber>
    </recommendedName>
    <alternativeName>
        <fullName evidence="1">Isoleucyl-tRNA synthetase</fullName>
        <shortName evidence="1">IleRS</shortName>
    </alternativeName>
</protein>
<dbReference type="EC" id="6.1.1.5" evidence="1"/>
<dbReference type="EMBL" id="CP000487">
    <property type="protein sequence ID" value="ABK82625.1"/>
    <property type="molecule type" value="Genomic_DNA"/>
</dbReference>
<dbReference type="RefSeq" id="WP_011731879.1">
    <property type="nucleotide sequence ID" value="NC_008599.1"/>
</dbReference>
<dbReference type="SMR" id="A0RNK3"/>
<dbReference type="GeneID" id="61064455"/>
<dbReference type="KEGG" id="cff:CFF8240_0610"/>
<dbReference type="eggNOG" id="COG0060">
    <property type="taxonomic scope" value="Bacteria"/>
</dbReference>
<dbReference type="HOGENOM" id="CLU_001493_7_0_7"/>
<dbReference type="Proteomes" id="UP000000760">
    <property type="component" value="Chromosome"/>
</dbReference>
<dbReference type="GO" id="GO:0005829">
    <property type="term" value="C:cytosol"/>
    <property type="evidence" value="ECO:0007669"/>
    <property type="project" value="TreeGrafter"/>
</dbReference>
<dbReference type="GO" id="GO:0002161">
    <property type="term" value="F:aminoacyl-tRNA deacylase activity"/>
    <property type="evidence" value="ECO:0007669"/>
    <property type="project" value="InterPro"/>
</dbReference>
<dbReference type="GO" id="GO:0005524">
    <property type="term" value="F:ATP binding"/>
    <property type="evidence" value="ECO:0007669"/>
    <property type="project" value="UniProtKB-UniRule"/>
</dbReference>
<dbReference type="GO" id="GO:0004822">
    <property type="term" value="F:isoleucine-tRNA ligase activity"/>
    <property type="evidence" value="ECO:0007669"/>
    <property type="project" value="UniProtKB-UniRule"/>
</dbReference>
<dbReference type="GO" id="GO:0000049">
    <property type="term" value="F:tRNA binding"/>
    <property type="evidence" value="ECO:0007669"/>
    <property type="project" value="InterPro"/>
</dbReference>
<dbReference type="GO" id="GO:0008270">
    <property type="term" value="F:zinc ion binding"/>
    <property type="evidence" value="ECO:0007669"/>
    <property type="project" value="UniProtKB-UniRule"/>
</dbReference>
<dbReference type="GO" id="GO:0006428">
    <property type="term" value="P:isoleucyl-tRNA aminoacylation"/>
    <property type="evidence" value="ECO:0007669"/>
    <property type="project" value="UniProtKB-UniRule"/>
</dbReference>
<dbReference type="CDD" id="cd07960">
    <property type="entry name" value="Anticodon_Ia_Ile_BEm"/>
    <property type="match status" value="1"/>
</dbReference>
<dbReference type="CDD" id="cd00818">
    <property type="entry name" value="IleRS_core"/>
    <property type="match status" value="1"/>
</dbReference>
<dbReference type="FunFam" id="3.40.50.620:FF:000092">
    <property type="entry name" value="Isoleucine--tRNA ligase"/>
    <property type="match status" value="1"/>
</dbReference>
<dbReference type="Gene3D" id="1.10.730.20">
    <property type="match status" value="1"/>
</dbReference>
<dbReference type="Gene3D" id="3.40.50.620">
    <property type="entry name" value="HUPs"/>
    <property type="match status" value="2"/>
</dbReference>
<dbReference type="Gene3D" id="1.10.10.830">
    <property type="entry name" value="Ile-tRNA synthetase CP2 domain-like"/>
    <property type="match status" value="1"/>
</dbReference>
<dbReference type="Gene3D" id="3.90.740.10">
    <property type="entry name" value="Valyl/Leucyl/Isoleucyl-tRNA synthetase, editing domain"/>
    <property type="match status" value="1"/>
</dbReference>
<dbReference type="HAMAP" id="MF_02002">
    <property type="entry name" value="Ile_tRNA_synth_type1"/>
    <property type="match status" value="1"/>
</dbReference>
<dbReference type="InterPro" id="IPR001412">
    <property type="entry name" value="aa-tRNA-synth_I_CS"/>
</dbReference>
<dbReference type="InterPro" id="IPR002300">
    <property type="entry name" value="aa-tRNA-synth_Ia"/>
</dbReference>
<dbReference type="InterPro" id="IPR033708">
    <property type="entry name" value="Anticodon_Ile_BEm"/>
</dbReference>
<dbReference type="InterPro" id="IPR002301">
    <property type="entry name" value="Ile-tRNA-ligase"/>
</dbReference>
<dbReference type="InterPro" id="IPR023585">
    <property type="entry name" value="Ile-tRNA-ligase_type1"/>
</dbReference>
<dbReference type="InterPro" id="IPR050081">
    <property type="entry name" value="Ile-tRNA_ligase"/>
</dbReference>
<dbReference type="InterPro" id="IPR013155">
    <property type="entry name" value="M/V/L/I-tRNA-synth_anticd-bd"/>
</dbReference>
<dbReference type="InterPro" id="IPR014729">
    <property type="entry name" value="Rossmann-like_a/b/a_fold"/>
</dbReference>
<dbReference type="InterPro" id="IPR009080">
    <property type="entry name" value="tRNAsynth_Ia_anticodon-bd"/>
</dbReference>
<dbReference type="InterPro" id="IPR009008">
    <property type="entry name" value="Val/Leu/Ile-tRNA-synth_edit"/>
</dbReference>
<dbReference type="NCBIfam" id="TIGR00392">
    <property type="entry name" value="ileS"/>
    <property type="match status" value="1"/>
</dbReference>
<dbReference type="PANTHER" id="PTHR42765:SF1">
    <property type="entry name" value="ISOLEUCINE--TRNA LIGASE, MITOCHONDRIAL"/>
    <property type="match status" value="1"/>
</dbReference>
<dbReference type="PANTHER" id="PTHR42765">
    <property type="entry name" value="SOLEUCYL-TRNA SYNTHETASE"/>
    <property type="match status" value="1"/>
</dbReference>
<dbReference type="Pfam" id="PF08264">
    <property type="entry name" value="Anticodon_1"/>
    <property type="match status" value="1"/>
</dbReference>
<dbReference type="Pfam" id="PF00133">
    <property type="entry name" value="tRNA-synt_1"/>
    <property type="match status" value="1"/>
</dbReference>
<dbReference type="PRINTS" id="PR00984">
    <property type="entry name" value="TRNASYNTHILE"/>
</dbReference>
<dbReference type="SUPFAM" id="SSF47323">
    <property type="entry name" value="Anticodon-binding domain of a subclass of class I aminoacyl-tRNA synthetases"/>
    <property type="match status" value="1"/>
</dbReference>
<dbReference type="SUPFAM" id="SSF52374">
    <property type="entry name" value="Nucleotidylyl transferase"/>
    <property type="match status" value="1"/>
</dbReference>
<dbReference type="SUPFAM" id="SSF50677">
    <property type="entry name" value="ValRS/IleRS/LeuRS editing domain"/>
    <property type="match status" value="1"/>
</dbReference>
<dbReference type="PROSITE" id="PS00178">
    <property type="entry name" value="AA_TRNA_LIGASE_I"/>
    <property type="match status" value="1"/>
</dbReference>